<keyword id="KW-0067">ATP-binding</keyword>
<keyword id="KW-0963">Cytoplasm</keyword>
<keyword id="KW-0324">Glycolysis</keyword>
<keyword id="KW-0418">Kinase</keyword>
<keyword id="KW-0547">Nucleotide-binding</keyword>
<keyword id="KW-1185">Reference proteome</keyword>
<keyword id="KW-0808">Transferase</keyword>
<name>PGK_HALLT</name>
<organism>
    <name type="scientific">Halorubrum lacusprofundi (strain ATCC 49239 / DSM 5036 / JCM 8891 / ACAM 34)</name>
    <dbReference type="NCBI Taxonomy" id="416348"/>
    <lineage>
        <taxon>Archaea</taxon>
        <taxon>Methanobacteriati</taxon>
        <taxon>Methanobacteriota</taxon>
        <taxon>Stenosarchaea group</taxon>
        <taxon>Halobacteria</taxon>
        <taxon>Halobacteriales</taxon>
        <taxon>Haloferacaceae</taxon>
        <taxon>Halorubrum</taxon>
    </lineage>
</organism>
<feature type="chain" id="PRO_1000192861" description="Phosphoglycerate kinase">
    <location>
        <begin position="1"/>
        <end position="407"/>
    </location>
</feature>
<feature type="binding site" evidence="1">
    <location>
        <begin position="21"/>
        <end position="23"/>
    </location>
    <ligand>
        <name>substrate</name>
    </ligand>
</feature>
<feature type="binding site" evidence="1">
    <location>
        <position position="36"/>
    </location>
    <ligand>
        <name>substrate</name>
    </ligand>
</feature>
<feature type="binding site" evidence="1">
    <location>
        <begin position="59"/>
        <end position="62"/>
    </location>
    <ligand>
        <name>substrate</name>
    </ligand>
</feature>
<feature type="binding site" evidence="1">
    <location>
        <position position="116"/>
    </location>
    <ligand>
        <name>substrate</name>
    </ligand>
</feature>
<feature type="binding site" evidence="1">
    <location>
        <position position="156"/>
    </location>
    <ligand>
        <name>substrate</name>
    </ligand>
</feature>
<feature type="binding site" evidence="1">
    <location>
        <position position="332"/>
    </location>
    <ligand>
        <name>ATP</name>
        <dbReference type="ChEBI" id="CHEBI:30616"/>
    </ligand>
</feature>
<feature type="binding site" evidence="1">
    <location>
        <begin position="358"/>
        <end position="361"/>
    </location>
    <ligand>
        <name>ATP</name>
        <dbReference type="ChEBI" id="CHEBI:30616"/>
    </ligand>
</feature>
<evidence type="ECO:0000255" key="1">
    <source>
        <dbReference type="HAMAP-Rule" id="MF_00145"/>
    </source>
</evidence>
<comment type="catalytic activity">
    <reaction evidence="1">
        <text>(2R)-3-phosphoglycerate + ATP = (2R)-3-phospho-glyceroyl phosphate + ADP</text>
        <dbReference type="Rhea" id="RHEA:14801"/>
        <dbReference type="ChEBI" id="CHEBI:30616"/>
        <dbReference type="ChEBI" id="CHEBI:57604"/>
        <dbReference type="ChEBI" id="CHEBI:58272"/>
        <dbReference type="ChEBI" id="CHEBI:456216"/>
        <dbReference type="EC" id="2.7.2.3"/>
    </reaction>
</comment>
<comment type="pathway">
    <text evidence="1">Carbohydrate degradation; glycolysis; pyruvate from D-glyceraldehyde 3-phosphate: step 2/5.</text>
</comment>
<comment type="subunit">
    <text evidence="1">Monomer.</text>
</comment>
<comment type="subcellular location">
    <subcellularLocation>
        <location evidence="1">Cytoplasm</location>
    </subcellularLocation>
</comment>
<comment type="similarity">
    <text evidence="1">Belongs to the phosphoglycerate kinase family.</text>
</comment>
<sequence length="407" mass="43823">MAAFDTIDDLPADSRVLVRLDLNSPIEDGKPQDNRRFERHAETVRELADAGHRVVLMAHQGRPGRDDFTSLSGHADILADHVGRDVAFVADTFGDEALDAIDALGAGEVLLLENTRMCDDELPEADPEEKAETEFVQTLAPQFDAYVNDAYSAAHRKHASLVGFPLVLPAYAGRVMETEYEANTAIATREFDGPVTMVVGGTKATDVIGVMDALDDRVDRFLLGGVAGELFLRAAGHPVGHDLEGTDLFDEQWEENRELIESVLDERGDAIRLATDLAYEGPDGDRAEVAVDDIDEKTDGYLDVGSETIAAYEPPIHESDAVFVKGALGVFEDERFADGTVGVLEAIAETDCFSVVGGGDTSRAIEMYGLDEDDFSHVSIAGGAYIRALTGEPLPAVEVLEAAAGRQ</sequence>
<protein>
    <recommendedName>
        <fullName evidence="1">Phosphoglycerate kinase</fullName>
        <ecNumber evidence="1">2.7.2.3</ecNumber>
    </recommendedName>
</protein>
<gene>
    <name evidence="1" type="primary">pgk</name>
    <name type="ordered locus">Hlac_2372</name>
</gene>
<reference key="1">
    <citation type="journal article" date="2016" name="Stand. Genomic Sci.">
        <title>Complete genome sequence of the Antarctic Halorubrum lacusprofundi type strain ACAM 34.</title>
        <authorList>
            <person name="Anderson I.J."/>
            <person name="DasSarma P."/>
            <person name="Lucas S."/>
            <person name="Copeland A."/>
            <person name="Lapidus A."/>
            <person name="Del Rio T.G."/>
            <person name="Tice H."/>
            <person name="Dalin E."/>
            <person name="Bruce D.C."/>
            <person name="Goodwin L."/>
            <person name="Pitluck S."/>
            <person name="Sims D."/>
            <person name="Brettin T.S."/>
            <person name="Detter J.C."/>
            <person name="Han C.S."/>
            <person name="Larimer F."/>
            <person name="Hauser L."/>
            <person name="Land M."/>
            <person name="Ivanova N."/>
            <person name="Richardson P."/>
            <person name="Cavicchioli R."/>
            <person name="DasSarma S."/>
            <person name="Woese C.R."/>
            <person name="Kyrpides N.C."/>
        </authorList>
    </citation>
    <scope>NUCLEOTIDE SEQUENCE [LARGE SCALE GENOMIC DNA]</scope>
    <source>
        <strain>ATCC 49239 / DSM 5036 / JCM 8891 / ACAM 34</strain>
    </source>
</reference>
<dbReference type="EC" id="2.7.2.3" evidence="1"/>
<dbReference type="EMBL" id="CP001365">
    <property type="protein sequence ID" value="ACM57947.1"/>
    <property type="molecule type" value="Genomic_DNA"/>
</dbReference>
<dbReference type="RefSeq" id="WP_015911067.1">
    <property type="nucleotide sequence ID" value="NC_012029.1"/>
</dbReference>
<dbReference type="SMR" id="B9LSK0"/>
<dbReference type="GeneID" id="7401990"/>
<dbReference type="KEGG" id="hla:Hlac_2372"/>
<dbReference type="eggNOG" id="arCOG00496">
    <property type="taxonomic scope" value="Archaea"/>
</dbReference>
<dbReference type="HOGENOM" id="CLU_025427_0_2_2"/>
<dbReference type="UniPathway" id="UPA00109">
    <property type="reaction ID" value="UER00185"/>
</dbReference>
<dbReference type="Proteomes" id="UP000000740">
    <property type="component" value="Chromosome 1"/>
</dbReference>
<dbReference type="GO" id="GO:0005829">
    <property type="term" value="C:cytosol"/>
    <property type="evidence" value="ECO:0007669"/>
    <property type="project" value="TreeGrafter"/>
</dbReference>
<dbReference type="GO" id="GO:0043531">
    <property type="term" value="F:ADP binding"/>
    <property type="evidence" value="ECO:0007669"/>
    <property type="project" value="TreeGrafter"/>
</dbReference>
<dbReference type="GO" id="GO:0005524">
    <property type="term" value="F:ATP binding"/>
    <property type="evidence" value="ECO:0007669"/>
    <property type="project" value="UniProtKB-KW"/>
</dbReference>
<dbReference type="GO" id="GO:0004618">
    <property type="term" value="F:phosphoglycerate kinase activity"/>
    <property type="evidence" value="ECO:0007669"/>
    <property type="project" value="UniProtKB-UniRule"/>
</dbReference>
<dbReference type="GO" id="GO:0006094">
    <property type="term" value="P:gluconeogenesis"/>
    <property type="evidence" value="ECO:0007669"/>
    <property type="project" value="TreeGrafter"/>
</dbReference>
<dbReference type="GO" id="GO:0006096">
    <property type="term" value="P:glycolytic process"/>
    <property type="evidence" value="ECO:0007669"/>
    <property type="project" value="UniProtKB-UniRule"/>
</dbReference>
<dbReference type="FunFam" id="3.40.50.1260:FF:000006">
    <property type="entry name" value="Phosphoglycerate kinase"/>
    <property type="match status" value="1"/>
</dbReference>
<dbReference type="Gene3D" id="3.40.50.1260">
    <property type="entry name" value="Phosphoglycerate kinase, N-terminal domain"/>
    <property type="match status" value="2"/>
</dbReference>
<dbReference type="HAMAP" id="MF_00145">
    <property type="entry name" value="Phosphoglyc_kinase"/>
    <property type="match status" value="1"/>
</dbReference>
<dbReference type="InterPro" id="IPR001576">
    <property type="entry name" value="Phosphoglycerate_kinase"/>
</dbReference>
<dbReference type="InterPro" id="IPR015911">
    <property type="entry name" value="Phosphoglycerate_kinase_CS"/>
</dbReference>
<dbReference type="InterPro" id="IPR015824">
    <property type="entry name" value="Phosphoglycerate_kinase_N"/>
</dbReference>
<dbReference type="InterPro" id="IPR036043">
    <property type="entry name" value="Phosphoglycerate_kinase_sf"/>
</dbReference>
<dbReference type="PANTHER" id="PTHR11406">
    <property type="entry name" value="PHOSPHOGLYCERATE KINASE"/>
    <property type="match status" value="1"/>
</dbReference>
<dbReference type="PANTHER" id="PTHR11406:SF23">
    <property type="entry name" value="PHOSPHOGLYCERATE KINASE 1, CHLOROPLASTIC-RELATED"/>
    <property type="match status" value="1"/>
</dbReference>
<dbReference type="Pfam" id="PF00162">
    <property type="entry name" value="PGK"/>
    <property type="match status" value="1"/>
</dbReference>
<dbReference type="PIRSF" id="PIRSF000724">
    <property type="entry name" value="Pgk"/>
    <property type="match status" value="1"/>
</dbReference>
<dbReference type="PRINTS" id="PR00477">
    <property type="entry name" value="PHGLYCKINASE"/>
</dbReference>
<dbReference type="SUPFAM" id="SSF53748">
    <property type="entry name" value="Phosphoglycerate kinase"/>
    <property type="match status" value="1"/>
</dbReference>
<dbReference type="PROSITE" id="PS00111">
    <property type="entry name" value="PGLYCERATE_KINASE"/>
    <property type="match status" value="1"/>
</dbReference>
<proteinExistence type="inferred from homology"/>
<accession>B9LSK0</accession>